<protein>
    <recommendedName>
        <fullName>DDB1- and CUL4-associated factor 11</fullName>
    </recommendedName>
    <alternativeName>
        <fullName>WD repeat-containing protein 23</fullName>
    </alternativeName>
</protein>
<accession>Q5E9I8</accession>
<keyword id="KW-0597">Phosphoprotein</keyword>
<keyword id="KW-1185">Reference proteome</keyword>
<keyword id="KW-0677">Repeat</keyword>
<keyword id="KW-0833">Ubl conjugation pathway</keyword>
<keyword id="KW-0853">WD repeat</keyword>
<sequence>MGSRNSSSAGTGSGDPSEGLPRRGAGLRRSEEEEEEDEDVDLAQVLAYLLRRGQVRLVQGGGAANLQLIQALSDSEEEHDSAWDGRLGDRYNPPVDATPDTRELECSEIKTQVELATGRLGLRRAARELSFPQMLHQRERGLCHQGSFSLGERSRVMSHFLPNDLGFTDTYSQKAFCGIYSKDGQIFMSACQDQTIRLYDCRYGRFRKFKSIKARDVGWSVLDVAFTPDGNHFLYSSWSDYIHICNIYGEGDTHTALDLRPDERRFAVFSIAVSSDGREVLGGANDGCLYVFDREQNRRTLQIESHEDDVNAVAFADVSSQILFSGGDDAICKVWDRRTMREDDPKPVGALAGHQDGITFIDSKGDARYLISNSKDQTIKLWDIRRFSSREGMEASRQAATQQNWDYRWQQVPKKAWRKLKLPGDSSLMTYRGHGVLHTLIRCRFSPTHSTGQQFIYSGCSTGKVVVYDLLSGHVVKKLTTHKACVRDVSWHPFEEKIVSSSWDGNLRLWQYRQAEYFQDDMPESEEHPSTPAPMSHPSTAFSSPQ</sequence>
<evidence type="ECO:0000250" key="1"/>
<evidence type="ECO:0000250" key="2">
    <source>
        <dbReference type="UniProtKB" id="Q91VU6"/>
    </source>
</evidence>
<evidence type="ECO:0000256" key="3">
    <source>
        <dbReference type="SAM" id="MobiDB-lite"/>
    </source>
</evidence>
<organism>
    <name type="scientific">Bos taurus</name>
    <name type="common">Bovine</name>
    <dbReference type="NCBI Taxonomy" id="9913"/>
    <lineage>
        <taxon>Eukaryota</taxon>
        <taxon>Metazoa</taxon>
        <taxon>Chordata</taxon>
        <taxon>Craniata</taxon>
        <taxon>Vertebrata</taxon>
        <taxon>Euteleostomi</taxon>
        <taxon>Mammalia</taxon>
        <taxon>Eutheria</taxon>
        <taxon>Laurasiatheria</taxon>
        <taxon>Artiodactyla</taxon>
        <taxon>Ruminantia</taxon>
        <taxon>Pecora</taxon>
        <taxon>Bovidae</taxon>
        <taxon>Bovinae</taxon>
        <taxon>Bos</taxon>
    </lineage>
</organism>
<comment type="function">
    <text evidence="1">May function as a substrate receptor for CUL4-DDB1 E3 ubiquitin-protein ligase complex.</text>
</comment>
<comment type="pathway">
    <text>Protein modification; protein ubiquitination.</text>
</comment>
<comment type="subunit">
    <text evidence="1">Interacts with DDB1 and CUL4A.</text>
</comment>
<reference key="1">
    <citation type="journal article" date="2005" name="BMC Genomics">
        <title>Characterization of 954 bovine full-CDS cDNA sequences.</title>
        <authorList>
            <person name="Harhay G.P."/>
            <person name="Sonstegard T.S."/>
            <person name="Keele J.W."/>
            <person name="Heaton M.P."/>
            <person name="Clawson M.L."/>
            <person name="Snelling W.M."/>
            <person name="Wiedmann R.T."/>
            <person name="Van Tassell C.P."/>
            <person name="Smith T.P.L."/>
        </authorList>
    </citation>
    <scope>NUCLEOTIDE SEQUENCE [LARGE SCALE MRNA]</scope>
</reference>
<name>DCA11_BOVIN</name>
<gene>
    <name type="primary">DCAF11</name>
    <name type="synonym">WDR23</name>
</gene>
<proteinExistence type="evidence at transcript level"/>
<dbReference type="EMBL" id="BT020932">
    <property type="protein sequence ID" value="AAX08949.1"/>
    <property type="molecule type" value="mRNA"/>
</dbReference>
<dbReference type="RefSeq" id="NP_001014954.1">
    <property type="nucleotide sequence ID" value="NM_001014954.1"/>
</dbReference>
<dbReference type="SMR" id="Q5E9I8"/>
<dbReference type="FunCoup" id="Q5E9I8">
    <property type="interactions" value="2410"/>
</dbReference>
<dbReference type="STRING" id="9913.ENSBTAP00000028515"/>
<dbReference type="PaxDb" id="9913-ENSBTAP00000028515"/>
<dbReference type="GeneID" id="539433"/>
<dbReference type="KEGG" id="bta:539433"/>
<dbReference type="CTD" id="80344"/>
<dbReference type="eggNOG" id="KOG0266">
    <property type="taxonomic scope" value="Eukaryota"/>
</dbReference>
<dbReference type="InParanoid" id="Q5E9I8"/>
<dbReference type="OrthoDB" id="63070at2759"/>
<dbReference type="UniPathway" id="UPA00143"/>
<dbReference type="Proteomes" id="UP000009136">
    <property type="component" value="Unplaced"/>
</dbReference>
<dbReference type="GO" id="GO:0080008">
    <property type="term" value="C:Cul4-RING E3 ubiquitin ligase complex"/>
    <property type="evidence" value="ECO:0000318"/>
    <property type="project" value="GO_Central"/>
</dbReference>
<dbReference type="GO" id="GO:0043161">
    <property type="term" value="P:proteasome-mediated ubiquitin-dependent protein catabolic process"/>
    <property type="evidence" value="ECO:0000318"/>
    <property type="project" value="GO_Central"/>
</dbReference>
<dbReference type="GO" id="GO:0016567">
    <property type="term" value="P:protein ubiquitination"/>
    <property type="evidence" value="ECO:0007669"/>
    <property type="project" value="UniProtKB-UniPathway"/>
</dbReference>
<dbReference type="FunFam" id="2.130.10.10:FF:002187">
    <property type="entry name" value="DDB1 and CUL4 associated factor 11"/>
    <property type="match status" value="1"/>
</dbReference>
<dbReference type="FunFam" id="2.130.10.10:FF:000115">
    <property type="entry name" value="DDB1- and CUL4-associated factor 11 isoform X1"/>
    <property type="match status" value="1"/>
</dbReference>
<dbReference type="Gene3D" id="2.130.10.10">
    <property type="entry name" value="YVTN repeat-like/Quinoprotein amine dehydrogenase"/>
    <property type="match status" value="2"/>
</dbReference>
<dbReference type="InterPro" id="IPR051859">
    <property type="entry name" value="DCAF"/>
</dbReference>
<dbReference type="InterPro" id="IPR017399">
    <property type="entry name" value="DCAF11/LEC14B"/>
</dbReference>
<dbReference type="InterPro" id="IPR020472">
    <property type="entry name" value="G-protein_beta_WD-40_rep"/>
</dbReference>
<dbReference type="InterPro" id="IPR015943">
    <property type="entry name" value="WD40/YVTN_repeat-like_dom_sf"/>
</dbReference>
<dbReference type="InterPro" id="IPR036322">
    <property type="entry name" value="WD40_repeat_dom_sf"/>
</dbReference>
<dbReference type="InterPro" id="IPR001680">
    <property type="entry name" value="WD40_rpt"/>
</dbReference>
<dbReference type="PANTHER" id="PTHR19847">
    <property type="entry name" value="DDB1- AND CUL4-ASSOCIATED FACTOR 11"/>
    <property type="match status" value="1"/>
</dbReference>
<dbReference type="PANTHER" id="PTHR19847:SF7">
    <property type="entry name" value="DDB1- AND CUL4-ASSOCIATED FACTOR 11"/>
    <property type="match status" value="1"/>
</dbReference>
<dbReference type="Pfam" id="PF00400">
    <property type="entry name" value="WD40"/>
    <property type="match status" value="4"/>
</dbReference>
<dbReference type="PIRSF" id="PIRSF038135">
    <property type="entry name" value="WD_repeat_p23"/>
    <property type="match status" value="1"/>
</dbReference>
<dbReference type="PRINTS" id="PR00320">
    <property type="entry name" value="GPROTEINBRPT"/>
</dbReference>
<dbReference type="SMART" id="SM00320">
    <property type="entry name" value="WD40"/>
    <property type="match status" value="7"/>
</dbReference>
<dbReference type="SUPFAM" id="SSF50978">
    <property type="entry name" value="WD40 repeat-like"/>
    <property type="match status" value="1"/>
</dbReference>
<dbReference type="PROSITE" id="PS50082">
    <property type="entry name" value="WD_REPEATS_2"/>
    <property type="match status" value="3"/>
</dbReference>
<dbReference type="PROSITE" id="PS50294">
    <property type="entry name" value="WD_REPEATS_REGION"/>
    <property type="match status" value="1"/>
</dbReference>
<feature type="chain" id="PRO_0000244454" description="DDB1- and CUL4-associated factor 11">
    <location>
        <begin position="1"/>
        <end position="546"/>
    </location>
</feature>
<feature type="repeat" description="WD 1">
    <location>
        <begin position="170"/>
        <end position="210"/>
    </location>
</feature>
<feature type="repeat" description="WD 2">
    <location>
        <begin position="216"/>
        <end position="258"/>
    </location>
</feature>
<feature type="repeat" description="WD 3">
    <location>
        <begin position="263"/>
        <end position="302"/>
    </location>
</feature>
<feature type="repeat" description="WD 4">
    <location>
        <begin position="305"/>
        <end position="345"/>
    </location>
</feature>
<feature type="repeat" description="WD 5">
    <location>
        <begin position="353"/>
        <end position="392"/>
    </location>
</feature>
<feature type="repeat" description="WD 6">
    <location>
        <begin position="435"/>
        <end position="480"/>
    </location>
</feature>
<feature type="repeat" description="WD 7">
    <location>
        <begin position="481"/>
        <end position="520"/>
    </location>
</feature>
<feature type="region of interest" description="Disordered" evidence="3">
    <location>
        <begin position="1"/>
        <end position="40"/>
    </location>
</feature>
<feature type="region of interest" description="Disordered" evidence="3">
    <location>
        <begin position="79"/>
        <end position="100"/>
    </location>
</feature>
<feature type="region of interest" description="Disordered" evidence="3">
    <location>
        <begin position="521"/>
        <end position="546"/>
    </location>
</feature>
<feature type="compositionally biased region" description="Polar residues" evidence="3">
    <location>
        <begin position="1"/>
        <end position="10"/>
    </location>
</feature>
<feature type="compositionally biased region" description="Basic and acidic residues" evidence="3">
    <location>
        <begin position="80"/>
        <end position="89"/>
    </location>
</feature>
<feature type="compositionally biased region" description="Polar residues" evidence="3">
    <location>
        <begin position="537"/>
        <end position="546"/>
    </location>
</feature>
<feature type="modified residue" description="Phosphoserine" evidence="2">
    <location>
        <position position="73"/>
    </location>
</feature>
<feature type="modified residue" description="Phosphoserine" evidence="2">
    <location>
        <position position="75"/>
    </location>
</feature>